<name>SMIM3_HUMAN</name>
<gene>
    <name type="primary">SMIM3</name>
    <name type="synonym">C5orf62</name>
    <name type="synonym">NID67</name>
</gene>
<keyword id="KW-0472">Membrane</keyword>
<keyword id="KW-1267">Proteomics identification</keyword>
<keyword id="KW-1185">Reference proteome</keyword>
<keyword id="KW-0812">Transmembrane</keyword>
<keyword id="KW-1133">Transmembrane helix</keyword>
<accession>Q9BZL3</accession>
<accession>Q3MIG3</accession>
<accession>Q6ZUV4</accession>
<reference key="1">
    <citation type="journal article" date="2001" name="J. Neurosci. Res.">
        <title>NID67, a small putative membrane protein, is preferentially induced by NGF in PC12 pheochromocytoma cells.</title>
        <authorList>
            <person name="Vician L."/>
            <person name="Silver A.L."/>
            <person name="Farias-Eisner R."/>
            <person name="Herschman H.R."/>
        </authorList>
    </citation>
    <scope>NUCLEOTIDE SEQUENCE [MRNA]</scope>
    <source>
        <tissue>Colon</tissue>
    </source>
</reference>
<reference key="2">
    <citation type="journal article" date="2004" name="Nat. Genet.">
        <title>Complete sequencing and characterization of 21,243 full-length human cDNAs.</title>
        <authorList>
            <person name="Ota T."/>
            <person name="Suzuki Y."/>
            <person name="Nishikawa T."/>
            <person name="Otsuki T."/>
            <person name="Sugiyama T."/>
            <person name="Irie R."/>
            <person name="Wakamatsu A."/>
            <person name="Hayashi K."/>
            <person name="Sato H."/>
            <person name="Nagai K."/>
            <person name="Kimura K."/>
            <person name="Makita H."/>
            <person name="Sekine M."/>
            <person name="Obayashi M."/>
            <person name="Nishi T."/>
            <person name="Shibahara T."/>
            <person name="Tanaka T."/>
            <person name="Ishii S."/>
            <person name="Yamamoto J."/>
            <person name="Saito K."/>
            <person name="Kawai Y."/>
            <person name="Isono Y."/>
            <person name="Nakamura Y."/>
            <person name="Nagahari K."/>
            <person name="Murakami K."/>
            <person name="Yasuda T."/>
            <person name="Iwayanagi T."/>
            <person name="Wagatsuma M."/>
            <person name="Shiratori A."/>
            <person name="Sudo H."/>
            <person name="Hosoiri T."/>
            <person name="Kaku Y."/>
            <person name="Kodaira H."/>
            <person name="Kondo H."/>
            <person name="Sugawara M."/>
            <person name="Takahashi M."/>
            <person name="Kanda K."/>
            <person name="Yokoi T."/>
            <person name="Furuya T."/>
            <person name="Kikkawa E."/>
            <person name="Omura Y."/>
            <person name="Abe K."/>
            <person name="Kamihara K."/>
            <person name="Katsuta N."/>
            <person name="Sato K."/>
            <person name="Tanikawa M."/>
            <person name="Yamazaki M."/>
            <person name="Ninomiya K."/>
            <person name="Ishibashi T."/>
            <person name="Yamashita H."/>
            <person name="Murakawa K."/>
            <person name="Fujimori K."/>
            <person name="Tanai H."/>
            <person name="Kimata M."/>
            <person name="Watanabe M."/>
            <person name="Hiraoka S."/>
            <person name="Chiba Y."/>
            <person name="Ishida S."/>
            <person name="Ono Y."/>
            <person name="Takiguchi S."/>
            <person name="Watanabe S."/>
            <person name="Yosida M."/>
            <person name="Hotuta T."/>
            <person name="Kusano J."/>
            <person name="Kanehori K."/>
            <person name="Takahashi-Fujii A."/>
            <person name="Hara H."/>
            <person name="Tanase T.-O."/>
            <person name="Nomura Y."/>
            <person name="Togiya S."/>
            <person name="Komai F."/>
            <person name="Hara R."/>
            <person name="Takeuchi K."/>
            <person name="Arita M."/>
            <person name="Imose N."/>
            <person name="Musashino K."/>
            <person name="Yuuki H."/>
            <person name="Oshima A."/>
            <person name="Sasaki N."/>
            <person name="Aotsuka S."/>
            <person name="Yoshikawa Y."/>
            <person name="Matsunawa H."/>
            <person name="Ichihara T."/>
            <person name="Shiohata N."/>
            <person name="Sano S."/>
            <person name="Moriya S."/>
            <person name="Momiyama H."/>
            <person name="Satoh N."/>
            <person name="Takami S."/>
            <person name="Terashima Y."/>
            <person name="Suzuki O."/>
            <person name="Nakagawa S."/>
            <person name="Senoh A."/>
            <person name="Mizoguchi H."/>
            <person name="Goto Y."/>
            <person name="Shimizu F."/>
            <person name="Wakebe H."/>
            <person name="Hishigaki H."/>
            <person name="Watanabe T."/>
            <person name="Sugiyama A."/>
            <person name="Takemoto M."/>
            <person name="Kawakami B."/>
            <person name="Yamazaki M."/>
            <person name="Watanabe K."/>
            <person name="Kumagai A."/>
            <person name="Itakura S."/>
            <person name="Fukuzumi Y."/>
            <person name="Fujimori Y."/>
            <person name="Komiyama M."/>
            <person name="Tashiro H."/>
            <person name="Tanigami A."/>
            <person name="Fujiwara T."/>
            <person name="Ono T."/>
            <person name="Yamada K."/>
            <person name="Fujii Y."/>
            <person name="Ozaki K."/>
            <person name="Hirao M."/>
            <person name="Ohmori Y."/>
            <person name="Kawabata A."/>
            <person name="Hikiji T."/>
            <person name="Kobatake N."/>
            <person name="Inagaki H."/>
            <person name="Ikema Y."/>
            <person name="Okamoto S."/>
            <person name="Okitani R."/>
            <person name="Kawakami T."/>
            <person name="Noguchi S."/>
            <person name="Itoh T."/>
            <person name="Shigeta K."/>
            <person name="Senba T."/>
            <person name="Matsumura K."/>
            <person name="Nakajima Y."/>
            <person name="Mizuno T."/>
            <person name="Morinaga M."/>
            <person name="Sasaki M."/>
            <person name="Togashi T."/>
            <person name="Oyama M."/>
            <person name="Hata H."/>
            <person name="Watanabe M."/>
            <person name="Komatsu T."/>
            <person name="Mizushima-Sugano J."/>
            <person name="Satoh T."/>
            <person name="Shirai Y."/>
            <person name="Takahashi Y."/>
            <person name="Nakagawa K."/>
            <person name="Okumura K."/>
            <person name="Nagase T."/>
            <person name="Nomura N."/>
            <person name="Kikuchi H."/>
            <person name="Masuho Y."/>
            <person name="Yamashita R."/>
            <person name="Nakai K."/>
            <person name="Yada T."/>
            <person name="Nakamura Y."/>
            <person name="Ohara O."/>
            <person name="Isogai T."/>
            <person name="Sugano S."/>
        </authorList>
    </citation>
    <scope>NUCLEOTIDE SEQUENCE [LARGE SCALE MRNA]</scope>
    <source>
        <tissue>Neuroblastoma</tissue>
    </source>
</reference>
<reference key="3">
    <citation type="journal article" date="2004" name="Nature">
        <title>The DNA sequence and comparative analysis of human chromosome 5.</title>
        <authorList>
            <person name="Schmutz J."/>
            <person name="Martin J."/>
            <person name="Terry A."/>
            <person name="Couronne O."/>
            <person name="Grimwood J."/>
            <person name="Lowry S."/>
            <person name="Gordon L.A."/>
            <person name="Scott D."/>
            <person name="Xie G."/>
            <person name="Huang W."/>
            <person name="Hellsten U."/>
            <person name="Tran-Gyamfi M."/>
            <person name="She X."/>
            <person name="Prabhakar S."/>
            <person name="Aerts A."/>
            <person name="Altherr M."/>
            <person name="Bajorek E."/>
            <person name="Black S."/>
            <person name="Branscomb E."/>
            <person name="Caoile C."/>
            <person name="Challacombe J.F."/>
            <person name="Chan Y.M."/>
            <person name="Denys M."/>
            <person name="Detter J.C."/>
            <person name="Escobar J."/>
            <person name="Flowers D."/>
            <person name="Fotopulos D."/>
            <person name="Glavina T."/>
            <person name="Gomez M."/>
            <person name="Gonzales E."/>
            <person name="Goodstein D."/>
            <person name="Grigoriev I."/>
            <person name="Groza M."/>
            <person name="Hammon N."/>
            <person name="Hawkins T."/>
            <person name="Haydu L."/>
            <person name="Israni S."/>
            <person name="Jett J."/>
            <person name="Kadner K."/>
            <person name="Kimball H."/>
            <person name="Kobayashi A."/>
            <person name="Lopez F."/>
            <person name="Lou Y."/>
            <person name="Martinez D."/>
            <person name="Medina C."/>
            <person name="Morgan J."/>
            <person name="Nandkeshwar R."/>
            <person name="Noonan J.P."/>
            <person name="Pitluck S."/>
            <person name="Pollard M."/>
            <person name="Predki P."/>
            <person name="Priest J."/>
            <person name="Ramirez L."/>
            <person name="Retterer J."/>
            <person name="Rodriguez A."/>
            <person name="Rogers S."/>
            <person name="Salamov A."/>
            <person name="Salazar A."/>
            <person name="Thayer N."/>
            <person name="Tice H."/>
            <person name="Tsai M."/>
            <person name="Ustaszewska A."/>
            <person name="Vo N."/>
            <person name="Wheeler J."/>
            <person name="Wu K."/>
            <person name="Yang J."/>
            <person name="Dickson M."/>
            <person name="Cheng J.-F."/>
            <person name="Eichler E.E."/>
            <person name="Olsen A."/>
            <person name="Pennacchio L.A."/>
            <person name="Rokhsar D.S."/>
            <person name="Richardson P."/>
            <person name="Lucas S.M."/>
            <person name="Myers R.M."/>
            <person name="Rubin E.M."/>
        </authorList>
    </citation>
    <scope>NUCLEOTIDE SEQUENCE [LARGE SCALE GENOMIC DNA]</scope>
</reference>
<reference key="4">
    <citation type="submission" date="2005-09" db="EMBL/GenBank/DDBJ databases">
        <authorList>
            <person name="Mural R.J."/>
            <person name="Istrail S."/>
            <person name="Sutton G."/>
            <person name="Florea L."/>
            <person name="Halpern A.L."/>
            <person name="Mobarry C.M."/>
            <person name="Lippert R."/>
            <person name="Walenz B."/>
            <person name="Shatkay H."/>
            <person name="Dew I."/>
            <person name="Miller J.R."/>
            <person name="Flanigan M.J."/>
            <person name="Edwards N.J."/>
            <person name="Bolanos R."/>
            <person name="Fasulo D."/>
            <person name="Halldorsson B.V."/>
            <person name="Hannenhalli S."/>
            <person name="Turner R."/>
            <person name="Yooseph S."/>
            <person name="Lu F."/>
            <person name="Nusskern D.R."/>
            <person name="Shue B.C."/>
            <person name="Zheng X.H."/>
            <person name="Zhong F."/>
            <person name="Delcher A.L."/>
            <person name="Huson D.H."/>
            <person name="Kravitz S.A."/>
            <person name="Mouchard L."/>
            <person name="Reinert K."/>
            <person name="Remington K.A."/>
            <person name="Clark A.G."/>
            <person name="Waterman M.S."/>
            <person name="Eichler E.E."/>
            <person name="Adams M.D."/>
            <person name="Hunkapiller M.W."/>
            <person name="Myers E.W."/>
            <person name="Venter J.C."/>
        </authorList>
    </citation>
    <scope>NUCLEOTIDE SEQUENCE [LARGE SCALE GENOMIC DNA]</scope>
</reference>
<reference key="5">
    <citation type="journal article" date="2004" name="Genome Res.">
        <title>The status, quality, and expansion of the NIH full-length cDNA project: the Mammalian Gene Collection (MGC).</title>
        <authorList>
            <consortium name="The MGC Project Team"/>
        </authorList>
    </citation>
    <scope>NUCLEOTIDE SEQUENCE [LARGE SCALE MRNA]</scope>
    <source>
        <tissue>Brain</tissue>
        <tissue>Pancreas</tissue>
    </source>
</reference>
<evidence type="ECO:0000250" key="1">
    <source>
        <dbReference type="UniProtKB" id="Q99PE6"/>
    </source>
</evidence>
<evidence type="ECO:0000255" key="2"/>
<evidence type="ECO:0000305" key="3"/>
<proteinExistence type="evidence at protein level"/>
<dbReference type="EMBL" id="AF313413">
    <property type="protein sequence ID" value="AAG53959.1"/>
    <property type="molecule type" value="mRNA"/>
</dbReference>
<dbReference type="EMBL" id="AK125286">
    <property type="protein sequence ID" value="BAC86114.1"/>
    <property type="status" value="ALT_SEQ"/>
    <property type="molecule type" value="mRNA"/>
</dbReference>
<dbReference type="EMBL" id="AC010441">
    <property type="status" value="NOT_ANNOTATED_CDS"/>
    <property type="molecule type" value="Genomic_DNA"/>
</dbReference>
<dbReference type="EMBL" id="CH471062">
    <property type="protein sequence ID" value="EAW61705.1"/>
    <property type="status" value="ALT_SEQ"/>
    <property type="molecule type" value="Genomic_DNA"/>
</dbReference>
<dbReference type="EMBL" id="BC009719">
    <property type="protein sequence ID" value="AAH09719.1"/>
    <property type="molecule type" value="mRNA"/>
</dbReference>
<dbReference type="EMBL" id="BC101838">
    <property type="protein sequence ID" value="AAI01839.1"/>
    <property type="status" value="ALT_SEQ"/>
    <property type="molecule type" value="mRNA"/>
</dbReference>
<dbReference type="EMBL" id="BC101840">
    <property type="protein sequence ID" value="AAI01841.1"/>
    <property type="status" value="ALT_SEQ"/>
    <property type="molecule type" value="mRNA"/>
</dbReference>
<dbReference type="EMBL" id="BC106040">
    <property type="protein sequence ID" value="AAI06041.1"/>
    <property type="status" value="ALT_SEQ"/>
    <property type="molecule type" value="mRNA"/>
</dbReference>
<dbReference type="CCDS" id="CCDS47312.2"/>
<dbReference type="RefSeq" id="NP_116565.3">
    <property type="nucleotide sequence ID" value="NM_032947.4"/>
</dbReference>
<dbReference type="SMR" id="Q9BZL3"/>
<dbReference type="BioGRID" id="124436">
    <property type="interactions" value="53"/>
</dbReference>
<dbReference type="FunCoup" id="Q9BZL3">
    <property type="interactions" value="29"/>
</dbReference>
<dbReference type="IntAct" id="Q9BZL3">
    <property type="interactions" value="50"/>
</dbReference>
<dbReference type="STRING" id="9606.ENSP00000436897"/>
<dbReference type="GlyConnect" id="2929">
    <property type="glycosylation" value="2 O-Linked glycans (1 site)"/>
</dbReference>
<dbReference type="iPTMnet" id="Q9BZL3"/>
<dbReference type="BioMuta" id="SMIM3"/>
<dbReference type="PaxDb" id="9606-ENSP00000436897"/>
<dbReference type="PeptideAtlas" id="Q9BZL3"/>
<dbReference type="Antibodypedia" id="71669">
    <property type="antibodies" value="4 antibodies from 4 providers"/>
</dbReference>
<dbReference type="DNASU" id="85027"/>
<dbReference type="Ensembl" id="ENST00000526627.2">
    <property type="protein sequence ID" value="ENSP00000436897.1"/>
    <property type="gene ID" value="ENSG00000256235.3"/>
</dbReference>
<dbReference type="Ensembl" id="ENST00000648745.1">
    <property type="protein sequence ID" value="ENSP00000496958.1"/>
    <property type="gene ID" value="ENSG00000256235.3"/>
</dbReference>
<dbReference type="GeneID" id="85027"/>
<dbReference type="KEGG" id="hsa:85027"/>
<dbReference type="MANE-Select" id="ENST00000526627.2">
    <property type="protein sequence ID" value="ENSP00000436897.1"/>
    <property type="RefSeq nucleotide sequence ID" value="NM_032947.5"/>
    <property type="RefSeq protein sequence ID" value="NP_116565.3"/>
</dbReference>
<dbReference type="UCSC" id="uc003lsw.4">
    <property type="organism name" value="human"/>
</dbReference>
<dbReference type="AGR" id="HGNC:30248"/>
<dbReference type="CTD" id="85027"/>
<dbReference type="DisGeNET" id="85027"/>
<dbReference type="GeneCards" id="SMIM3"/>
<dbReference type="HGNC" id="HGNC:30248">
    <property type="gene designation" value="SMIM3"/>
</dbReference>
<dbReference type="HPA" id="ENSG00000256235">
    <property type="expression patterns" value="Tissue enhanced (adipose)"/>
</dbReference>
<dbReference type="MIM" id="608324">
    <property type="type" value="gene"/>
</dbReference>
<dbReference type="neXtProt" id="NX_Q9BZL3"/>
<dbReference type="OpenTargets" id="ENSG00000256235"/>
<dbReference type="PharmGKB" id="PA165660222"/>
<dbReference type="VEuPathDB" id="HostDB:ENSG00000256235"/>
<dbReference type="eggNOG" id="ENOG502SGSH">
    <property type="taxonomic scope" value="Eukaryota"/>
</dbReference>
<dbReference type="GeneTree" id="ENSGT00390000009443"/>
<dbReference type="HOGENOM" id="CLU_2941125_0_0_1"/>
<dbReference type="InParanoid" id="Q9BZL3"/>
<dbReference type="OMA" id="YRIRTHP"/>
<dbReference type="PAN-GO" id="Q9BZL3">
    <property type="GO annotations" value="0 GO annotations based on evolutionary models"/>
</dbReference>
<dbReference type="PhylomeDB" id="Q9BZL3"/>
<dbReference type="TreeFam" id="TF354124"/>
<dbReference type="PathwayCommons" id="Q9BZL3"/>
<dbReference type="SignaLink" id="Q9BZL3"/>
<dbReference type="BioGRID-ORCS" id="85027">
    <property type="hits" value="36 hits in 1148 CRISPR screens"/>
</dbReference>
<dbReference type="ChiTaRS" id="SMIM3">
    <property type="organism name" value="human"/>
</dbReference>
<dbReference type="GenomeRNAi" id="85027"/>
<dbReference type="Pharos" id="Q9BZL3">
    <property type="development level" value="Tdark"/>
</dbReference>
<dbReference type="PRO" id="PR:Q9BZL3"/>
<dbReference type="Proteomes" id="UP000005640">
    <property type="component" value="Chromosome 5"/>
</dbReference>
<dbReference type="RNAct" id="Q9BZL3">
    <property type="molecule type" value="protein"/>
</dbReference>
<dbReference type="Bgee" id="ENSG00000256235">
    <property type="expression patterns" value="Expressed in adipose tissue of abdominal region and 147 other cell types or tissues"/>
</dbReference>
<dbReference type="GO" id="GO:0016020">
    <property type="term" value="C:membrane"/>
    <property type="evidence" value="ECO:0007669"/>
    <property type="project" value="UniProtKB-SubCell"/>
</dbReference>
<dbReference type="GO" id="GO:0042802">
    <property type="term" value="F:identical protein binding"/>
    <property type="evidence" value="ECO:0000353"/>
    <property type="project" value="IntAct"/>
</dbReference>
<dbReference type="InterPro" id="IPR035275">
    <property type="entry name" value="Smim3"/>
</dbReference>
<dbReference type="PANTHER" id="PTHR37859">
    <property type="entry name" value="SMALL INTEGRAL MEMBRANE PROTEIN 3"/>
    <property type="match status" value="1"/>
</dbReference>
<dbReference type="PANTHER" id="PTHR37859:SF1">
    <property type="entry name" value="SMALL INTEGRAL MEMBRANE PROTEIN 3"/>
    <property type="match status" value="1"/>
</dbReference>
<dbReference type="Pfam" id="PF17307">
    <property type="entry name" value="Smim3"/>
    <property type="match status" value="1"/>
</dbReference>
<protein>
    <recommendedName>
        <fullName>Small integral membrane protein 3</fullName>
    </recommendedName>
    <alternativeName>
        <fullName>NGF-induced differentiation clone 67 protein</fullName>
    </alternativeName>
    <alternativeName>
        <fullName>Small membrane protein NID67</fullName>
    </alternativeName>
</protein>
<feature type="chain" id="PRO_0000096816" description="Small integral membrane protein 3">
    <location>
        <begin position="1"/>
        <end position="60"/>
    </location>
</feature>
<feature type="transmembrane region" description="Helical" evidence="2">
    <location>
        <begin position="20"/>
        <end position="40"/>
    </location>
</feature>
<feature type="site" description="Cleavage" evidence="1">
    <location>
        <begin position="19"/>
        <end position="20"/>
    </location>
</feature>
<organism>
    <name type="scientific">Homo sapiens</name>
    <name type="common">Human</name>
    <dbReference type="NCBI Taxonomy" id="9606"/>
    <lineage>
        <taxon>Eukaryota</taxon>
        <taxon>Metazoa</taxon>
        <taxon>Chordata</taxon>
        <taxon>Craniata</taxon>
        <taxon>Vertebrata</taxon>
        <taxon>Euteleostomi</taxon>
        <taxon>Mammalia</taxon>
        <taxon>Eutheria</taxon>
        <taxon>Euarchontoglires</taxon>
        <taxon>Primates</taxon>
        <taxon>Haplorrhini</taxon>
        <taxon>Catarrhini</taxon>
        <taxon>Hominidae</taxon>
        <taxon>Homo</taxon>
    </lineage>
</organism>
<sequence>MDAVSQVPMEVVLPKHILDIWVIVLIILATIVIMTSLLLCPATAVIIYRMRTHPILSGAV</sequence>
<comment type="interaction">
    <interactant intactId="EBI-741850">
        <id>Q9BZL3</id>
    </interactant>
    <interactant intactId="EBI-12808270">
        <id>P07307-3</id>
        <label>ASGR2</label>
    </interactant>
    <organismsDiffer>false</organismsDiffer>
    <experiments>3</experiments>
</comment>
<comment type="interaction">
    <interactant intactId="EBI-741850">
        <id>Q9BZL3</id>
    </interactant>
    <interactant intactId="EBI-12894731">
        <id>Q9UN42</id>
        <label>ATP1B4</label>
    </interactant>
    <organismsDiffer>false</organismsDiffer>
    <experiments>3</experiments>
</comment>
<comment type="interaction">
    <interactant intactId="EBI-741850">
        <id>Q9BZL3</id>
    </interactant>
    <interactant intactId="EBI-721179">
        <id>P27449</id>
        <label>ATP6V0C</label>
    </interactant>
    <organismsDiffer>false</organismsDiffer>
    <experiments>6</experiments>
</comment>
<comment type="interaction">
    <interactant intactId="EBI-741850">
        <id>Q9BZL3</id>
    </interactant>
    <interactant intactId="EBI-749464">
        <id>Q12983</id>
        <label>BNIP3</label>
    </interactant>
    <organismsDiffer>false</organismsDiffer>
    <experiments>3</experiments>
</comment>
<comment type="interaction">
    <interactant intactId="EBI-741850">
        <id>Q9BZL3</id>
    </interactant>
    <interactant intactId="EBI-11532900">
        <id>J3KQ12</id>
        <label>BSCL2</label>
    </interactant>
    <organismsDiffer>false</organismsDiffer>
    <experiments>6</experiments>
</comment>
<comment type="interaction">
    <interactant intactId="EBI-741850">
        <id>Q9BZL3</id>
    </interactant>
    <interactant intactId="EBI-741806">
        <id>Q96G97</id>
        <label>BSCL2</label>
    </interactant>
    <organismsDiffer>false</organismsDiffer>
    <experiments>4</experiments>
</comment>
<comment type="interaction">
    <interactant intactId="EBI-741850">
        <id>Q9BZL3</id>
    </interactant>
    <interactant intactId="EBI-10178113">
        <id>Q96G97-4</id>
        <label>BSCL2</label>
    </interactant>
    <organismsDiffer>false</organismsDiffer>
    <experiments>3</experiments>
</comment>
<comment type="interaction">
    <interactant intactId="EBI-741850">
        <id>Q9BZL3</id>
    </interactant>
    <interactant intactId="EBI-17953245">
        <id>Q6UXG8-3</id>
        <label>BTNL9</label>
    </interactant>
    <organismsDiffer>false</organismsDiffer>
    <experiments>3</experiments>
</comment>
<comment type="interaction">
    <interactant intactId="EBI-741850">
        <id>Q9BZL3</id>
    </interactant>
    <interactant intactId="EBI-6657396">
        <id>P19397</id>
        <label>CD53</label>
    </interactant>
    <organismsDiffer>false</organismsDiffer>
    <experiments>3</experiments>
</comment>
<comment type="interaction">
    <interactant intactId="EBI-741850">
        <id>Q9BZL3</id>
    </interactant>
    <interactant intactId="EBI-7797864">
        <id>P11912</id>
        <label>CD79A</label>
    </interactant>
    <organismsDiffer>false</organismsDiffer>
    <experiments>3</experiments>
</comment>
<comment type="interaction">
    <interactant intactId="EBI-741850">
        <id>Q9BZL3</id>
    </interactant>
    <interactant intactId="EBI-682379">
        <id>P27701</id>
        <label>CD82</label>
    </interactant>
    <organismsDiffer>false</organismsDiffer>
    <experiments>3</experiments>
</comment>
<comment type="interaction">
    <interactant intactId="EBI-741850">
        <id>Q9BZL3</id>
    </interactant>
    <interactant intactId="EBI-12820543">
        <id>O75508</id>
        <label>CLDN11</label>
    </interactant>
    <organismsDiffer>false</organismsDiffer>
    <experiments>3</experiments>
</comment>
<comment type="interaction">
    <interactant intactId="EBI-741850">
        <id>Q9BZL3</id>
    </interactant>
    <interactant intactId="EBI-18400628">
        <id>O00501</id>
        <label>CLDN5</label>
    </interactant>
    <organismsDiffer>false</organismsDiffer>
    <experiments>3</experiments>
</comment>
<comment type="interaction">
    <interactant intactId="EBI-741850">
        <id>Q9BZL3</id>
    </interactant>
    <interactant intactId="EBI-10215641">
        <id>P56748</id>
        <label>CLDN8</label>
    </interactant>
    <organismsDiffer>false</organismsDiffer>
    <experiments>3</experiments>
</comment>
<comment type="interaction">
    <interactant intactId="EBI-741850">
        <id>Q9BZL3</id>
    </interactant>
    <interactant intactId="EBI-11977093">
        <id>Q6ZS10</id>
        <label>CLEC17A</label>
    </interactant>
    <organismsDiffer>false</organismsDiffer>
    <experiments>6</experiments>
</comment>
<comment type="interaction">
    <interactant intactId="EBI-741850">
        <id>Q9BZL3</id>
    </interactant>
    <interactant intactId="EBI-3939278">
        <id>Q9BXN2</id>
        <label>CLEC7A</label>
    </interactant>
    <organismsDiffer>false</organismsDiffer>
    <experiments>3</experiments>
</comment>
<comment type="interaction">
    <interactant intactId="EBI-741850">
        <id>Q9BZL3</id>
    </interactant>
    <interactant intactId="EBI-11989440">
        <id>Q9BXN2-6</id>
        <label>CLEC7A</label>
    </interactant>
    <organismsDiffer>false</organismsDiffer>
    <experiments>4</experiments>
</comment>
<comment type="interaction">
    <interactant intactId="EBI-741850">
        <id>Q9BZL3</id>
    </interactant>
    <interactant intactId="EBI-12172273">
        <id>O95406</id>
        <label>CNIH1</label>
    </interactant>
    <organismsDiffer>false</organismsDiffer>
    <experiments>6</experiments>
</comment>
<comment type="interaction">
    <interactant intactId="EBI-741850">
        <id>Q9BZL3</id>
    </interactant>
    <interactant intactId="EBI-12208021">
        <id>Q8TBE1</id>
        <label>CNIH3</label>
    </interactant>
    <organismsDiffer>false</organismsDiffer>
    <experiments>5</experiments>
</comment>
<comment type="interaction">
    <interactant intactId="EBI-741850">
        <id>Q9BZL3</id>
    </interactant>
    <interactant intactId="EBI-3915253">
        <id>Q15125</id>
        <label>EBP</label>
    </interactant>
    <organismsDiffer>false</organismsDiffer>
    <experiments>3</experiments>
</comment>
<comment type="interaction">
    <interactant intactId="EBI-741850">
        <id>Q9BZL3</id>
    </interactant>
    <interactant intactId="EBI-4319440">
        <id>P54849</id>
        <label>EMP1</label>
    </interactant>
    <organismsDiffer>false</organismsDiffer>
    <experiments>6</experiments>
</comment>
<comment type="interaction">
    <interactant intactId="EBI-741850">
        <id>Q9BZL3</id>
    </interactant>
    <interactant intactId="EBI-3907816">
        <id>P54852</id>
        <label>EMP3</label>
    </interactant>
    <organismsDiffer>false</organismsDiffer>
    <experiments>3</experiments>
</comment>
<comment type="interaction">
    <interactant intactId="EBI-741850">
        <id>Q9BZL3</id>
    </interactant>
    <interactant intactId="EBI-781551">
        <id>Q9Y282</id>
        <label>ERGIC3</label>
    </interactant>
    <organismsDiffer>false</organismsDiffer>
    <experiments>3</experiments>
</comment>
<comment type="interaction">
    <interactant intactId="EBI-741850">
        <id>Q9BZL3</id>
    </interactant>
    <interactant intactId="EBI-12142257">
        <id>Q8TBE3</id>
        <label>FNDC9</label>
    </interactant>
    <organismsDiffer>false</organismsDiffer>
    <experiments>3</experiments>
</comment>
<comment type="interaction">
    <interactant intactId="EBI-741850">
        <id>Q9BZL3</id>
    </interactant>
    <interactant intactId="EBI-6166686">
        <id>Q96F15</id>
        <label>GIMAP5</label>
    </interactant>
    <organismsDiffer>false</organismsDiffer>
    <experiments>3</experiments>
</comment>
<comment type="interaction">
    <interactant intactId="EBI-741850">
        <id>Q9BZL3</id>
    </interactant>
    <interactant intactId="EBI-18076404">
        <id>O15529</id>
        <label>GPR42</label>
    </interactant>
    <organismsDiffer>false</organismsDiffer>
    <experiments>3</experiments>
</comment>
<comment type="interaction">
    <interactant intactId="EBI-741850">
        <id>Q9BZL3</id>
    </interactant>
    <interactant intactId="EBI-3905457">
        <id>P38484</id>
        <label>IFNGR2</label>
    </interactant>
    <organismsDiffer>false</organismsDiffer>
    <experiments>3</experiments>
</comment>
<comment type="interaction">
    <interactant intactId="EBI-741850">
        <id>Q9BZL3</id>
    </interactant>
    <interactant intactId="EBI-17272405">
        <id>Q8N743</id>
        <label>KIR3DL3</label>
    </interactant>
    <organismsDiffer>false</organismsDiffer>
    <experiments>3</experiments>
</comment>
<comment type="interaction">
    <interactant intactId="EBI-741850">
        <id>Q9BZL3</id>
    </interactant>
    <interactant intactId="EBI-2876949">
        <id>P43657</id>
        <label>LPAR6</label>
    </interactant>
    <organismsDiffer>false</organismsDiffer>
    <experiments>3</experiments>
</comment>
<comment type="interaction">
    <interactant intactId="EBI-741850">
        <id>Q9BZL3</id>
    </interactant>
    <interactant intactId="EBI-10264855">
        <id>Q8N112</id>
        <label>LSMEM2</label>
    </interactant>
    <organismsDiffer>false</organismsDiffer>
    <experiments>3</experiments>
</comment>
<comment type="interaction">
    <interactant intactId="EBI-741850">
        <id>Q9BZL3</id>
    </interactant>
    <interactant intactId="EBI-741037">
        <id>Q9BRK4</id>
        <label>LZTS2</label>
    </interactant>
    <organismsDiffer>false</organismsDiffer>
    <experiments>3</experiments>
</comment>
<comment type="interaction">
    <interactant intactId="EBI-741850">
        <id>Q9BZL3</id>
    </interactant>
    <interactant intactId="EBI-3932027">
        <id>P21145</id>
        <label>MAL</label>
    </interactant>
    <organismsDiffer>false</organismsDiffer>
    <experiments>6</experiments>
</comment>
<comment type="interaction">
    <interactant intactId="EBI-741850">
        <id>Q9BZL3</id>
    </interactant>
    <interactant intactId="EBI-12806656">
        <id>Q96HJ5</id>
        <label>MS4A3</label>
    </interactant>
    <organismsDiffer>false</organismsDiffer>
    <experiments>3</experiments>
</comment>
<comment type="interaction">
    <interactant intactId="EBI-741850">
        <id>Q9BZL3</id>
    </interactant>
    <interactant intactId="EBI-16427978">
        <id>Q9BQ51</id>
        <label>PDCD1LG2</label>
    </interactant>
    <organismsDiffer>false</organismsDiffer>
    <experiments>3</experiments>
</comment>
<comment type="interaction">
    <interactant intactId="EBI-741850">
        <id>Q9BZL3</id>
    </interactant>
    <interactant intactId="EBI-12188331">
        <id>P60201-2</id>
        <label>PLP1</label>
    </interactant>
    <organismsDiffer>false</organismsDiffer>
    <experiments>4</experiments>
</comment>
<comment type="interaction">
    <interactant intactId="EBI-741850">
        <id>Q9BZL3</id>
    </interactant>
    <interactant intactId="EBI-2845982">
        <id>Q01453</id>
        <label>PMP22</label>
    </interactant>
    <organismsDiffer>false</organismsDiffer>
    <experiments>9</experiments>
</comment>
<comment type="interaction">
    <interactant intactId="EBI-741850">
        <id>Q9BZL3</id>
    </interactant>
    <interactant intactId="EBI-302345">
        <id>Q8ND90</id>
        <label>PNMA1</label>
    </interactant>
    <organismsDiffer>false</organismsDiffer>
    <experiments>3</experiments>
</comment>
<comment type="interaction">
    <interactant intactId="EBI-741850">
        <id>Q9BZL3</id>
    </interactant>
    <interactant intactId="EBI-1052363">
        <id>Q9NS64</id>
        <label>RPRM</label>
    </interactant>
    <organismsDiffer>false</organismsDiffer>
    <experiments>3</experiments>
</comment>
<comment type="interaction">
    <interactant intactId="EBI-741850">
        <id>Q9BZL3</id>
    </interactant>
    <interactant intactId="EBI-8652744">
        <id>Q96IW7</id>
        <label>SEC22A</label>
    </interactant>
    <organismsDiffer>false</organismsDiffer>
    <experiments>3</experiments>
</comment>
<comment type="interaction">
    <interactant intactId="EBI-741850">
        <id>Q9BZL3</id>
    </interactant>
    <interactant intactId="EBI-10197617">
        <id>P11686</id>
        <label>SFTPC</label>
    </interactant>
    <organismsDiffer>false</organismsDiffer>
    <experiments>4</experiments>
</comment>
<comment type="interaction">
    <interactant intactId="EBI-741850">
        <id>Q9BZL3</id>
    </interactant>
    <interactant intactId="EBI-5663627">
        <id>Q16585</id>
        <label>SGCB</label>
    </interactant>
    <organismsDiffer>false</organismsDiffer>
    <experiments>3</experiments>
</comment>
<comment type="interaction">
    <interactant intactId="EBI-741850">
        <id>Q9BZL3</id>
    </interactant>
    <interactant intactId="EBI-12877338">
        <id>Q08AT0</id>
        <label>SGCZ</label>
    </interactant>
    <organismsDiffer>false</organismsDiffer>
    <experiments>3</experiments>
</comment>
<comment type="interaction">
    <interactant intactId="EBI-741850">
        <id>Q9BZL3</id>
    </interactant>
    <interactant intactId="EBI-1172714">
        <id>O15245</id>
        <label>SLC22A1</label>
    </interactant>
    <organismsDiffer>false</organismsDiffer>
    <experiments>3</experiments>
</comment>
<comment type="interaction">
    <interactant intactId="EBI-741850">
        <id>Q9BZL3</id>
    </interactant>
    <interactant intactId="EBI-9978441">
        <id>Q9H2H9</id>
        <label>SLC38A1</label>
    </interactant>
    <organismsDiffer>false</organismsDiffer>
    <experiments>3</experiments>
</comment>
<comment type="interaction">
    <interactant intactId="EBI-741850">
        <id>Q9BZL3</id>
    </interactant>
    <interactant intactId="EBI-8640191">
        <id>Q9NRQ5</id>
        <label>SMCO4</label>
    </interactant>
    <organismsDiffer>false</organismsDiffer>
    <experiments>5</experiments>
</comment>
<comment type="interaction">
    <interactant intactId="EBI-741850">
        <id>Q9BZL3</id>
    </interactant>
    <interactant intactId="EBI-741850">
        <id>Q9BZL3</id>
        <label>SMIM3</label>
    </interactant>
    <organismsDiffer>false</organismsDiffer>
    <experiments>3</experiments>
</comment>
<comment type="interaction">
    <interactant intactId="EBI-741850">
        <id>Q9BZL3</id>
    </interactant>
    <interactant intactId="EBI-17498703">
        <id>Q9HBV2</id>
        <label>SPACA1</label>
    </interactant>
    <organismsDiffer>false</organismsDiffer>
    <experiments>3</experiments>
</comment>
<comment type="interaction">
    <interactant intactId="EBI-741850">
        <id>Q9BZL3</id>
    </interactant>
    <interactant intactId="EBI-712466">
        <id>Q16623</id>
        <label>STX1A</label>
    </interactant>
    <organismsDiffer>false</organismsDiffer>
    <experiments>3</experiments>
</comment>
<comment type="interaction">
    <interactant intactId="EBI-741850">
        <id>Q9BZL3</id>
    </interactant>
    <interactant intactId="EBI-10329860">
        <id>Q9Y6I9</id>
        <label>TEX264</label>
    </interactant>
    <organismsDiffer>false</organismsDiffer>
    <experiments>3</experiments>
</comment>
<comment type="interaction">
    <interactant intactId="EBI-741850">
        <id>Q9BZL3</id>
    </interactant>
    <interactant intactId="EBI-13351685">
        <id>Q96CE8</id>
        <label>TM4SF18</label>
    </interactant>
    <organismsDiffer>false</organismsDiffer>
    <experiments>3</experiments>
</comment>
<comment type="interaction">
    <interactant intactId="EBI-741850">
        <id>Q9BZL3</id>
    </interactant>
    <interactant intactId="EBI-10255122">
        <id>Q6ZP80</id>
        <label>TMEM182</label>
    </interactant>
    <organismsDiffer>false</organismsDiffer>
    <experiments>3</experiments>
</comment>
<comment type="interaction">
    <interactant intactId="EBI-741850">
        <id>Q9BZL3</id>
    </interactant>
    <interactant intactId="EBI-10173151">
        <id>A2RU14</id>
        <label>TMEM218</label>
    </interactant>
    <organismsDiffer>false</organismsDiffer>
    <experiments>3</experiments>
</comment>
<comment type="interaction">
    <interactant intactId="EBI-741850">
        <id>Q9BZL3</id>
    </interactant>
    <interactant intactId="EBI-718439">
        <id>O95159</id>
        <label>ZFPL1</label>
    </interactant>
    <organismsDiffer>false</organismsDiffer>
    <experiments>5</experiments>
</comment>
<comment type="subcellular location">
    <subcellularLocation>
        <location evidence="3">Membrane</location>
        <topology evidence="3">Single-pass membrane protein</topology>
    </subcellularLocation>
</comment>
<comment type="induction">
    <text>By NGF.</text>
</comment>
<comment type="sequence caution" evidence="3">
    <conflict type="erroneous translation">
        <sequence resource="EMBL-CDS" id="AAI01839"/>
    </conflict>
    <text>Wrong choice of CDS.</text>
</comment>
<comment type="sequence caution" evidence="3">
    <conflict type="erroneous translation">
        <sequence resource="EMBL-CDS" id="AAI01841"/>
    </conflict>
    <text>Wrong choice of CDS.</text>
</comment>
<comment type="sequence caution" evidence="3">
    <conflict type="erroneous translation">
        <sequence resource="EMBL-CDS" id="AAI06041"/>
    </conflict>
    <text>Wrong choice of CDS.</text>
</comment>
<comment type="sequence caution" evidence="3">
    <conflict type="erroneous translation">
        <sequence resource="EMBL-CDS" id="BAC86114"/>
    </conflict>
    <text>Wrong choice of CDS.</text>
</comment>
<comment type="sequence caution" evidence="3">
    <conflict type="erroneous gene model prediction">
        <sequence resource="EMBL-CDS" id="EAW61705"/>
    </conflict>
</comment>